<dbReference type="EC" id="1.1.1.23" evidence="1"/>
<dbReference type="EMBL" id="BA000018">
    <property type="protein sequence ID" value="BAB43776.1"/>
    <property type="molecule type" value="Genomic_DNA"/>
</dbReference>
<dbReference type="PIR" id="F90076">
    <property type="entry name" value="F90076"/>
</dbReference>
<dbReference type="RefSeq" id="WP_000930649.1">
    <property type="nucleotide sequence ID" value="NC_002745.2"/>
</dbReference>
<dbReference type="SMR" id="P63953"/>
<dbReference type="EnsemblBacteria" id="BAB43776">
    <property type="protein sequence ID" value="BAB43776"/>
    <property type="gene ID" value="BAB43776"/>
</dbReference>
<dbReference type="KEGG" id="sau:SA2470"/>
<dbReference type="HOGENOM" id="CLU_006732_3_3_9"/>
<dbReference type="UniPathway" id="UPA00031">
    <property type="reaction ID" value="UER00014"/>
</dbReference>
<dbReference type="GO" id="GO:0005829">
    <property type="term" value="C:cytosol"/>
    <property type="evidence" value="ECO:0007669"/>
    <property type="project" value="TreeGrafter"/>
</dbReference>
<dbReference type="GO" id="GO:0004399">
    <property type="term" value="F:histidinol dehydrogenase activity"/>
    <property type="evidence" value="ECO:0007669"/>
    <property type="project" value="UniProtKB-UniRule"/>
</dbReference>
<dbReference type="GO" id="GO:0051287">
    <property type="term" value="F:NAD binding"/>
    <property type="evidence" value="ECO:0007669"/>
    <property type="project" value="InterPro"/>
</dbReference>
<dbReference type="GO" id="GO:0008270">
    <property type="term" value="F:zinc ion binding"/>
    <property type="evidence" value="ECO:0007669"/>
    <property type="project" value="UniProtKB-UniRule"/>
</dbReference>
<dbReference type="GO" id="GO:0000105">
    <property type="term" value="P:L-histidine biosynthetic process"/>
    <property type="evidence" value="ECO:0007669"/>
    <property type="project" value="UniProtKB-UniRule"/>
</dbReference>
<dbReference type="CDD" id="cd06572">
    <property type="entry name" value="Histidinol_dh"/>
    <property type="match status" value="1"/>
</dbReference>
<dbReference type="FunFam" id="3.40.50.1980:FF:000001">
    <property type="entry name" value="Histidinol dehydrogenase"/>
    <property type="match status" value="1"/>
</dbReference>
<dbReference type="FunFam" id="3.40.50.1980:FF:000026">
    <property type="entry name" value="Histidinol dehydrogenase"/>
    <property type="match status" value="1"/>
</dbReference>
<dbReference type="Gene3D" id="1.20.5.1300">
    <property type="match status" value="1"/>
</dbReference>
<dbReference type="Gene3D" id="3.40.50.1980">
    <property type="entry name" value="Nitrogenase molybdenum iron protein domain"/>
    <property type="match status" value="2"/>
</dbReference>
<dbReference type="HAMAP" id="MF_01024">
    <property type="entry name" value="HisD"/>
    <property type="match status" value="1"/>
</dbReference>
<dbReference type="InterPro" id="IPR016161">
    <property type="entry name" value="Ald_DH/histidinol_DH"/>
</dbReference>
<dbReference type="InterPro" id="IPR001692">
    <property type="entry name" value="Histidinol_DH_CS"/>
</dbReference>
<dbReference type="InterPro" id="IPR022695">
    <property type="entry name" value="Histidinol_DH_monofunct"/>
</dbReference>
<dbReference type="InterPro" id="IPR012131">
    <property type="entry name" value="Hstdl_DH"/>
</dbReference>
<dbReference type="NCBIfam" id="TIGR00069">
    <property type="entry name" value="hisD"/>
    <property type="match status" value="1"/>
</dbReference>
<dbReference type="NCBIfam" id="NF010343">
    <property type="entry name" value="PRK13770.1"/>
    <property type="match status" value="1"/>
</dbReference>
<dbReference type="PANTHER" id="PTHR21256:SF2">
    <property type="entry name" value="HISTIDINE BIOSYNTHESIS TRIFUNCTIONAL PROTEIN"/>
    <property type="match status" value="1"/>
</dbReference>
<dbReference type="PANTHER" id="PTHR21256">
    <property type="entry name" value="HISTIDINOL DEHYDROGENASE HDH"/>
    <property type="match status" value="1"/>
</dbReference>
<dbReference type="Pfam" id="PF00815">
    <property type="entry name" value="Histidinol_dh"/>
    <property type="match status" value="1"/>
</dbReference>
<dbReference type="PIRSF" id="PIRSF000099">
    <property type="entry name" value="Histidinol_dh"/>
    <property type="match status" value="1"/>
</dbReference>
<dbReference type="PRINTS" id="PR00083">
    <property type="entry name" value="HOLDHDRGNASE"/>
</dbReference>
<dbReference type="SUPFAM" id="SSF53720">
    <property type="entry name" value="ALDH-like"/>
    <property type="match status" value="1"/>
</dbReference>
<dbReference type="PROSITE" id="PS00611">
    <property type="entry name" value="HISOL_DEHYDROGENASE"/>
    <property type="match status" value="1"/>
</dbReference>
<evidence type="ECO:0000255" key="1">
    <source>
        <dbReference type="HAMAP-Rule" id="MF_01024"/>
    </source>
</evidence>
<accession>P63953</accession>
<accession>Q99QW3</accession>
<organism>
    <name type="scientific">Staphylococcus aureus (strain N315)</name>
    <dbReference type="NCBI Taxonomy" id="158879"/>
    <lineage>
        <taxon>Bacteria</taxon>
        <taxon>Bacillati</taxon>
        <taxon>Bacillota</taxon>
        <taxon>Bacilli</taxon>
        <taxon>Bacillales</taxon>
        <taxon>Staphylococcaceae</taxon>
        <taxon>Staphylococcus</taxon>
    </lineage>
</organism>
<sequence length="416" mass="46161">MLNAQQFLNQFSLEAPLDESLYPIIRDICQEVKVHGDKALKMYNLTFDHTKTDHLEISHEQIKAAFDTLDEKTKQALQQSYERIKAYQESIKQTNQQLEESVECYEIYHPLESVGIYVPGGKASYPSTVLMTATLAQVAGVENIVVVTPPQPNGVSQEVLAACYITQVNQVFQVGGAQSIAALTYGTETIPKVDKIVGPGNQFVAYAKKYLFGQVGIDQIAGPTEIALIIDDTADLDAIVYDVFAQAEHDELARTYVIGEDAQVLKDLESRIAKALPNVDRYDIVSKSIANQHYLIHASNFDEACHVMNTIAPEHASIQTVNPQPYIEKVKYVGALFIGHYSPEVIGDYVAGPSHVLPTNRTARFTNGLSVNDFLTRNTVIHLSKDTFEQIADSAQHIAHVEALYNHQQSILIRQS</sequence>
<feature type="chain" id="PRO_0000135854" description="Histidinol dehydrogenase">
    <location>
        <begin position="1"/>
        <end position="416"/>
    </location>
</feature>
<feature type="active site" description="Proton acceptor" evidence="1">
    <location>
        <position position="314"/>
    </location>
</feature>
<feature type="active site" description="Proton acceptor" evidence="1">
    <location>
        <position position="315"/>
    </location>
</feature>
<feature type="binding site" evidence="1">
    <location>
        <position position="117"/>
    </location>
    <ligand>
        <name>NAD(+)</name>
        <dbReference type="ChEBI" id="CHEBI:57540"/>
    </ligand>
</feature>
<feature type="binding site" evidence="1">
    <location>
        <position position="178"/>
    </location>
    <ligand>
        <name>NAD(+)</name>
        <dbReference type="ChEBI" id="CHEBI:57540"/>
    </ligand>
</feature>
<feature type="binding site" evidence="1">
    <location>
        <position position="201"/>
    </location>
    <ligand>
        <name>NAD(+)</name>
        <dbReference type="ChEBI" id="CHEBI:57540"/>
    </ligand>
</feature>
<feature type="binding site" evidence="1">
    <location>
        <position position="224"/>
    </location>
    <ligand>
        <name>substrate</name>
    </ligand>
</feature>
<feature type="binding site" evidence="1">
    <location>
        <position position="246"/>
    </location>
    <ligand>
        <name>substrate</name>
    </ligand>
</feature>
<feature type="binding site" evidence="1">
    <location>
        <position position="246"/>
    </location>
    <ligand>
        <name>Zn(2+)</name>
        <dbReference type="ChEBI" id="CHEBI:29105"/>
    </ligand>
</feature>
<feature type="binding site" evidence="1">
    <location>
        <position position="249"/>
    </location>
    <ligand>
        <name>substrate</name>
    </ligand>
</feature>
<feature type="binding site" evidence="1">
    <location>
        <position position="249"/>
    </location>
    <ligand>
        <name>Zn(2+)</name>
        <dbReference type="ChEBI" id="CHEBI:29105"/>
    </ligand>
</feature>
<feature type="binding site" evidence="1">
    <location>
        <position position="315"/>
    </location>
    <ligand>
        <name>substrate</name>
    </ligand>
</feature>
<feature type="binding site" evidence="1">
    <location>
        <position position="348"/>
    </location>
    <ligand>
        <name>substrate</name>
    </ligand>
</feature>
<feature type="binding site" evidence="1">
    <location>
        <position position="348"/>
    </location>
    <ligand>
        <name>Zn(2+)</name>
        <dbReference type="ChEBI" id="CHEBI:29105"/>
    </ligand>
</feature>
<feature type="binding site" evidence="1">
    <location>
        <position position="402"/>
    </location>
    <ligand>
        <name>substrate</name>
    </ligand>
</feature>
<feature type="binding site" evidence="1">
    <location>
        <position position="407"/>
    </location>
    <ligand>
        <name>substrate</name>
    </ligand>
</feature>
<feature type="binding site" evidence="1">
    <location>
        <position position="407"/>
    </location>
    <ligand>
        <name>Zn(2+)</name>
        <dbReference type="ChEBI" id="CHEBI:29105"/>
    </ligand>
</feature>
<keyword id="KW-0028">Amino-acid biosynthesis</keyword>
<keyword id="KW-0368">Histidine biosynthesis</keyword>
<keyword id="KW-0479">Metal-binding</keyword>
<keyword id="KW-0520">NAD</keyword>
<keyword id="KW-0560">Oxidoreductase</keyword>
<keyword id="KW-0862">Zinc</keyword>
<gene>
    <name evidence="1" type="primary">hisD</name>
    <name type="ordered locus">SA2470</name>
</gene>
<name>HISX_STAAN</name>
<comment type="function">
    <text evidence="1">Catalyzes the sequential NAD-dependent oxidations of L-histidinol to L-histidinaldehyde and then to L-histidine.</text>
</comment>
<comment type="catalytic activity">
    <reaction evidence="1">
        <text>L-histidinol + 2 NAD(+) + H2O = L-histidine + 2 NADH + 3 H(+)</text>
        <dbReference type="Rhea" id="RHEA:20641"/>
        <dbReference type="ChEBI" id="CHEBI:15377"/>
        <dbReference type="ChEBI" id="CHEBI:15378"/>
        <dbReference type="ChEBI" id="CHEBI:57540"/>
        <dbReference type="ChEBI" id="CHEBI:57595"/>
        <dbReference type="ChEBI" id="CHEBI:57699"/>
        <dbReference type="ChEBI" id="CHEBI:57945"/>
        <dbReference type="EC" id="1.1.1.23"/>
    </reaction>
</comment>
<comment type="cofactor">
    <cofactor evidence="1">
        <name>Zn(2+)</name>
        <dbReference type="ChEBI" id="CHEBI:29105"/>
    </cofactor>
    <text evidence="1">Binds 1 zinc ion per subunit.</text>
</comment>
<comment type="pathway">
    <text evidence="1">Amino-acid biosynthesis; L-histidine biosynthesis; L-histidine from 5-phospho-alpha-D-ribose 1-diphosphate: step 9/9.</text>
</comment>
<comment type="similarity">
    <text evidence="1">Belongs to the histidinol dehydrogenase family.</text>
</comment>
<protein>
    <recommendedName>
        <fullName evidence="1">Histidinol dehydrogenase</fullName>
        <shortName evidence="1">HDH</shortName>
        <ecNumber evidence="1">1.1.1.23</ecNumber>
    </recommendedName>
</protein>
<reference key="1">
    <citation type="journal article" date="2001" name="Lancet">
        <title>Whole genome sequencing of meticillin-resistant Staphylococcus aureus.</title>
        <authorList>
            <person name="Kuroda M."/>
            <person name="Ohta T."/>
            <person name="Uchiyama I."/>
            <person name="Baba T."/>
            <person name="Yuzawa H."/>
            <person name="Kobayashi I."/>
            <person name="Cui L."/>
            <person name="Oguchi A."/>
            <person name="Aoki K."/>
            <person name="Nagai Y."/>
            <person name="Lian J.-Q."/>
            <person name="Ito T."/>
            <person name="Kanamori M."/>
            <person name="Matsumaru H."/>
            <person name="Maruyama A."/>
            <person name="Murakami H."/>
            <person name="Hosoyama A."/>
            <person name="Mizutani-Ui Y."/>
            <person name="Takahashi N.K."/>
            <person name="Sawano T."/>
            <person name="Inoue R."/>
            <person name="Kaito C."/>
            <person name="Sekimizu K."/>
            <person name="Hirakawa H."/>
            <person name="Kuhara S."/>
            <person name="Goto S."/>
            <person name="Yabuzaki J."/>
            <person name="Kanehisa M."/>
            <person name="Yamashita A."/>
            <person name="Oshima K."/>
            <person name="Furuya K."/>
            <person name="Yoshino C."/>
            <person name="Shiba T."/>
            <person name="Hattori M."/>
            <person name="Ogasawara N."/>
            <person name="Hayashi H."/>
            <person name="Hiramatsu K."/>
        </authorList>
    </citation>
    <scope>NUCLEOTIDE SEQUENCE [LARGE SCALE GENOMIC DNA]</scope>
    <source>
        <strain>N315</strain>
    </source>
</reference>
<proteinExistence type="inferred from homology"/>